<protein>
    <recommendedName>
        <fullName>Probable endopolygalacturonase A</fullName>
        <ecNumber>3.2.1.15</ecNumber>
    </recommendedName>
    <alternativeName>
        <fullName>Pectinase A</fullName>
    </alternativeName>
    <alternativeName>
        <fullName>Polygalacturonase A</fullName>
    </alternativeName>
</protein>
<organism>
    <name type="scientific">Aspergillus niger (strain ATCC MYA-4892 / CBS 513.88 / FGSC A1513)</name>
    <dbReference type="NCBI Taxonomy" id="425011"/>
    <lineage>
        <taxon>Eukaryota</taxon>
        <taxon>Fungi</taxon>
        <taxon>Dikarya</taxon>
        <taxon>Ascomycota</taxon>
        <taxon>Pezizomycotina</taxon>
        <taxon>Eurotiomycetes</taxon>
        <taxon>Eurotiomycetidae</taxon>
        <taxon>Eurotiales</taxon>
        <taxon>Aspergillaceae</taxon>
        <taxon>Aspergillus</taxon>
        <taxon>Aspergillus subgen. Circumdati</taxon>
    </lineage>
</organism>
<proteinExistence type="inferred from homology"/>
<feature type="signal peptide" evidence="2">
    <location>
        <begin position="1"/>
        <end position="19"/>
    </location>
</feature>
<feature type="propeptide" id="PRO_0000393641" evidence="2">
    <location>
        <begin position="20"/>
        <end position="32"/>
    </location>
</feature>
<feature type="chain" id="PRO_5000221215" description="Probable endopolygalacturonase A">
    <location>
        <begin position="33"/>
        <end position="370"/>
    </location>
</feature>
<feature type="repeat" description="PbH1 1">
    <location>
        <begin position="162"/>
        <end position="192"/>
    </location>
</feature>
<feature type="repeat" description="PbH1 2">
    <location>
        <begin position="193"/>
        <end position="214"/>
    </location>
</feature>
<feature type="repeat" description="PbH1 3">
    <location>
        <begin position="215"/>
        <end position="235"/>
    </location>
</feature>
<feature type="repeat" description="PbH1 4">
    <location>
        <begin position="244"/>
        <end position="265"/>
    </location>
</feature>
<feature type="repeat" description="PbH1 5">
    <location>
        <begin position="273"/>
        <end position="295"/>
    </location>
</feature>
<feature type="repeat" description="PbH1 6">
    <location>
        <begin position="307"/>
        <end position="352"/>
    </location>
</feature>
<feature type="active site" description="Proton donor" evidence="3">
    <location>
        <position position="207"/>
    </location>
</feature>
<feature type="active site" evidence="3">
    <location>
        <position position="229"/>
    </location>
</feature>
<feature type="glycosylation site" description="N-linked (GlcNAc...) asparagine" evidence="2">
    <location>
        <position position="246"/>
    </location>
</feature>
<feature type="disulfide bond" evidence="1">
    <location>
        <begin position="35"/>
        <end position="50"/>
    </location>
</feature>
<feature type="disulfide bond" evidence="1">
    <location>
        <begin position="209"/>
        <end position="225"/>
    </location>
</feature>
<feature type="disulfide bond" evidence="1">
    <location>
        <begin position="335"/>
        <end position="340"/>
    </location>
</feature>
<feature type="disulfide bond" evidence="1">
    <location>
        <begin position="359"/>
        <end position="368"/>
    </location>
</feature>
<sequence length="370" mass="38735">MPSAKPLFCLATLAGAALAAPAPSRVSDFTKRSTCTFTDAATASESKTSCSDIVLKDITVPAGETLNLKDLNDGTTVTFEGTTTWEYEEWDGPLLRISGKDITVTQSSDAVLDGNGAKWWDGEGTNGGKTKPKFFYAHDLDDSKISGLYIKNTPVQAISVESDNLVIEDVTIDNSDGDSEGGHNTDGFDISESTYITITGATVKNQDDCVAINSGENIYFSGGTCSGGHGLSIGSVGGRDDNTVKNVTFIDSTVSDSENGVRIKTVYDATGTVEDITYSNIQLSGISDYGIVIEQDYENGDPTGTPSNGVTISDVTLEDITGSVDSDAVEIYILCGDGSCSDWTMSGIDITGGETSSDCENVPSGASCDQ</sequence>
<keyword id="KW-0961">Cell wall biogenesis/degradation</keyword>
<keyword id="KW-1015">Disulfide bond</keyword>
<keyword id="KW-0325">Glycoprotein</keyword>
<keyword id="KW-0326">Glycosidase</keyword>
<keyword id="KW-0378">Hydrolase</keyword>
<keyword id="KW-1185">Reference proteome</keyword>
<keyword id="KW-0677">Repeat</keyword>
<keyword id="KW-0964">Secreted</keyword>
<keyword id="KW-0732">Signal</keyword>
<keyword id="KW-0865">Zymogen</keyword>
<accession>A2R8F8</accession>
<comment type="function">
    <text evidence="1">Involved in maceration and soft-rotting of plant tissue. Hydrolyzes the 1,4-alpha glycosidic bonds of de-esterified pectate in the smooth region of the plant cell wall (By similarity).</text>
</comment>
<comment type="catalytic activity">
    <reaction>
        <text>(1,4-alpha-D-galacturonosyl)n+m + H2O = (1,4-alpha-D-galacturonosyl)n + (1,4-alpha-D-galacturonosyl)m.</text>
        <dbReference type="EC" id="3.2.1.15"/>
    </reaction>
</comment>
<comment type="subcellular location">
    <subcellularLocation>
        <location evidence="1">Secreted</location>
    </subcellularLocation>
</comment>
<comment type="similarity">
    <text evidence="4">Belongs to the glycosyl hydrolase 28 family.</text>
</comment>
<evidence type="ECO:0000250" key="1"/>
<evidence type="ECO:0000255" key="2"/>
<evidence type="ECO:0000255" key="3">
    <source>
        <dbReference type="PROSITE-ProRule" id="PRU10052"/>
    </source>
</evidence>
<evidence type="ECO:0000305" key="4"/>
<dbReference type="EC" id="3.2.1.15"/>
<dbReference type="EMBL" id="AM270374">
    <property type="protein sequence ID" value="CAK47020.1"/>
    <property type="molecule type" value="Genomic_DNA"/>
</dbReference>
<dbReference type="SMR" id="A2R8F8"/>
<dbReference type="CAZy" id="GH28">
    <property type="family name" value="Glycoside Hydrolase Family 28"/>
</dbReference>
<dbReference type="GlyCosmos" id="A2R8F8">
    <property type="glycosylation" value="1 site, No reported glycans"/>
</dbReference>
<dbReference type="HOGENOM" id="CLU_040116_0_0_1"/>
<dbReference type="Proteomes" id="UP000006706">
    <property type="component" value="Chromosome 5R"/>
</dbReference>
<dbReference type="GO" id="GO:0005576">
    <property type="term" value="C:extracellular region"/>
    <property type="evidence" value="ECO:0000250"/>
    <property type="project" value="UniProtKB"/>
</dbReference>
<dbReference type="GO" id="GO:0047911">
    <property type="term" value="F:galacturan 1,4-alpha-galacturonidase activity"/>
    <property type="evidence" value="ECO:0000250"/>
    <property type="project" value="UniProtKB"/>
</dbReference>
<dbReference type="GO" id="GO:0004650">
    <property type="term" value="F:polygalacturonase activity"/>
    <property type="evidence" value="ECO:0000250"/>
    <property type="project" value="UniProtKB"/>
</dbReference>
<dbReference type="GO" id="GO:0071555">
    <property type="term" value="P:cell wall organization"/>
    <property type="evidence" value="ECO:0007669"/>
    <property type="project" value="UniProtKB-KW"/>
</dbReference>
<dbReference type="GO" id="GO:0045490">
    <property type="term" value="P:pectin catabolic process"/>
    <property type="evidence" value="ECO:0000250"/>
    <property type="project" value="UniProtKB"/>
</dbReference>
<dbReference type="FunFam" id="2.160.20.10:FF:000002">
    <property type="entry name" value="Endopolygalacturonase D"/>
    <property type="match status" value="1"/>
</dbReference>
<dbReference type="Gene3D" id="2.160.20.10">
    <property type="entry name" value="Single-stranded right-handed beta-helix, Pectin lyase-like"/>
    <property type="match status" value="1"/>
</dbReference>
<dbReference type="InterPro" id="IPR000743">
    <property type="entry name" value="Glyco_hydro_28"/>
</dbReference>
<dbReference type="InterPro" id="IPR050434">
    <property type="entry name" value="Glycosyl_hydrlase_28"/>
</dbReference>
<dbReference type="InterPro" id="IPR006626">
    <property type="entry name" value="PbH1"/>
</dbReference>
<dbReference type="InterPro" id="IPR012334">
    <property type="entry name" value="Pectin_lyas_fold"/>
</dbReference>
<dbReference type="InterPro" id="IPR011050">
    <property type="entry name" value="Pectin_lyase_fold/virulence"/>
</dbReference>
<dbReference type="PANTHER" id="PTHR31884:SF13">
    <property type="entry name" value="ENDOPOLYGALACTURONASE B"/>
    <property type="match status" value="1"/>
</dbReference>
<dbReference type="PANTHER" id="PTHR31884">
    <property type="entry name" value="POLYGALACTURONASE"/>
    <property type="match status" value="1"/>
</dbReference>
<dbReference type="Pfam" id="PF00295">
    <property type="entry name" value="Glyco_hydro_28"/>
    <property type="match status" value="1"/>
</dbReference>
<dbReference type="SMART" id="SM00710">
    <property type="entry name" value="PbH1"/>
    <property type="match status" value="6"/>
</dbReference>
<dbReference type="SUPFAM" id="SSF51126">
    <property type="entry name" value="Pectin lyase-like"/>
    <property type="match status" value="1"/>
</dbReference>
<dbReference type="PROSITE" id="PS00502">
    <property type="entry name" value="POLYGALACTURONASE"/>
    <property type="match status" value="1"/>
</dbReference>
<reference key="1">
    <citation type="journal article" date="2007" name="Nat. Biotechnol.">
        <title>Genome sequencing and analysis of the versatile cell factory Aspergillus niger CBS 513.88.</title>
        <authorList>
            <person name="Pel H.J."/>
            <person name="de Winde J.H."/>
            <person name="Archer D.B."/>
            <person name="Dyer P.S."/>
            <person name="Hofmann G."/>
            <person name="Schaap P.J."/>
            <person name="Turner G."/>
            <person name="de Vries R.P."/>
            <person name="Albang R."/>
            <person name="Albermann K."/>
            <person name="Andersen M.R."/>
            <person name="Bendtsen J.D."/>
            <person name="Benen J.A.E."/>
            <person name="van den Berg M."/>
            <person name="Breestraat S."/>
            <person name="Caddick M.X."/>
            <person name="Contreras R."/>
            <person name="Cornell M."/>
            <person name="Coutinho P.M."/>
            <person name="Danchin E.G.J."/>
            <person name="Debets A.J.M."/>
            <person name="Dekker P."/>
            <person name="van Dijck P.W.M."/>
            <person name="van Dijk A."/>
            <person name="Dijkhuizen L."/>
            <person name="Driessen A.J.M."/>
            <person name="d'Enfert C."/>
            <person name="Geysens S."/>
            <person name="Goosen C."/>
            <person name="Groot G.S.P."/>
            <person name="de Groot P.W.J."/>
            <person name="Guillemette T."/>
            <person name="Henrissat B."/>
            <person name="Herweijer M."/>
            <person name="van den Hombergh J.P.T.W."/>
            <person name="van den Hondel C.A.M.J.J."/>
            <person name="van der Heijden R.T.J.M."/>
            <person name="van der Kaaij R.M."/>
            <person name="Klis F.M."/>
            <person name="Kools H.J."/>
            <person name="Kubicek C.P."/>
            <person name="van Kuyk P.A."/>
            <person name="Lauber J."/>
            <person name="Lu X."/>
            <person name="van der Maarel M.J.E.C."/>
            <person name="Meulenberg R."/>
            <person name="Menke H."/>
            <person name="Mortimer M.A."/>
            <person name="Nielsen J."/>
            <person name="Oliver S.G."/>
            <person name="Olsthoorn M."/>
            <person name="Pal K."/>
            <person name="van Peij N.N.M.E."/>
            <person name="Ram A.F.J."/>
            <person name="Rinas U."/>
            <person name="Roubos J.A."/>
            <person name="Sagt C.M.J."/>
            <person name="Schmoll M."/>
            <person name="Sun J."/>
            <person name="Ussery D."/>
            <person name="Varga J."/>
            <person name="Vervecken W."/>
            <person name="van de Vondervoort P.J.J."/>
            <person name="Wedler H."/>
            <person name="Woesten H.A.B."/>
            <person name="Zeng A.-P."/>
            <person name="van Ooyen A.J.J."/>
            <person name="Visser J."/>
            <person name="Stam H."/>
        </authorList>
    </citation>
    <scope>NUCLEOTIDE SEQUENCE [LARGE SCALE GENOMIC DNA]</scope>
    <source>
        <strain>ATCC MYA-4892 / CBS 513.88 / FGSC A1513</strain>
    </source>
</reference>
<gene>
    <name type="primary">pgaA</name>
    <name type="synonym">pecA</name>
    <name type="ORF">An16g06990</name>
</gene>
<name>PGLRA_ASPNC</name>